<evidence type="ECO:0000256" key="1">
    <source>
        <dbReference type="SAM" id="MobiDB-lite"/>
    </source>
</evidence>
<keyword id="KW-0244">Early protein</keyword>
<dbReference type="EMBL" id="M23195">
    <property type="protein sequence ID" value="AAA42436.1"/>
    <property type="molecule type" value="Genomic_DNA"/>
</dbReference>
<dbReference type="PIR" id="B31162">
    <property type="entry name" value="ERAD64"/>
</dbReference>
<protein>
    <recommendedName>
        <fullName>Early E3 6.4 kDa protein</fullName>
    </recommendedName>
</protein>
<feature type="chain" id="PRO_0000221761" description="Early E3 6.4 kDa protein">
    <location>
        <begin position="1"/>
        <end position="61"/>
    </location>
</feature>
<feature type="region of interest" description="Disordered" evidence="1">
    <location>
        <begin position="1"/>
        <end position="25"/>
    </location>
</feature>
<sequence length="61" mass="6441">MGNAGPLKLHTITKPGTIPYPPHGSQEFPSGTLSLSEVLTVPSALVTTLSFFLKCAIWPCS</sequence>
<proteinExistence type="predicted"/>
<reference key="1">
    <citation type="journal article" date="1988" name="J. Virol.">
        <title>Sequence and genetic organization of adenovirus type 35 early region 3.</title>
        <authorList>
            <person name="Flomenberg P.R."/>
            <person name="Chen M."/>
            <person name="Horwitz M.S."/>
        </authorList>
    </citation>
    <scope>NUCLEOTIDE SEQUENCE [GENOMIC DNA]</scope>
    <source>
        <strain>Holden</strain>
    </source>
</reference>
<organismHost>
    <name type="scientific">Homo sapiens</name>
    <name type="common">Human</name>
    <dbReference type="NCBI Taxonomy" id="9606"/>
</organismHost>
<accession>P17591</accession>
<name>E306_ADE35</name>
<organism>
    <name type="scientific">Human adenovirus B serotype 35</name>
    <name type="common">HAdV-35</name>
    <name type="synonym">Human adenovirus 35</name>
    <dbReference type="NCBI Taxonomy" id="10522"/>
    <lineage>
        <taxon>Viruses</taxon>
        <taxon>Varidnaviria</taxon>
        <taxon>Bamfordvirae</taxon>
        <taxon>Preplasmiviricota</taxon>
        <taxon>Tectiliviricetes</taxon>
        <taxon>Rowavirales</taxon>
        <taxon>Adenoviridae</taxon>
        <taxon>Mastadenovirus</taxon>
        <taxon>Human mastadenovirus B</taxon>
    </lineage>
</organism>